<proteinExistence type="inferred from homology"/>
<gene>
    <name evidence="1" type="primary">hprK</name>
    <name type="ordered locus">BMASAVP1_A0079</name>
</gene>
<feature type="chain" id="PRO_1000067133" description="HPr kinase/phosphorylase">
    <location>
        <begin position="1"/>
        <end position="322"/>
    </location>
</feature>
<feature type="region of interest" description="Important for the catalytic mechanism of both phosphorylation and dephosphorylation" evidence="1">
    <location>
        <begin position="209"/>
        <end position="218"/>
    </location>
</feature>
<feature type="region of interest" description="Important for the catalytic mechanism of dephosphorylation" evidence="1">
    <location>
        <begin position="271"/>
        <end position="276"/>
    </location>
</feature>
<feature type="active site" evidence="1">
    <location>
        <position position="146"/>
    </location>
</feature>
<feature type="active site" evidence="1">
    <location>
        <position position="167"/>
    </location>
</feature>
<feature type="active site" description="Proton acceptor; for phosphorylation activity. Proton donor; for dephosphorylation activity" evidence="1">
    <location>
        <position position="185"/>
    </location>
</feature>
<feature type="active site" evidence="1">
    <location>
        <position position="250"/>
    </location>
</feature>
<feature type="binding site" evidence="1">
    <location>
        <begin position="161"/>
        <end position="168"/>
    </location>
    <ligand>
        <name>ATP</name>
        <dbReference type="ChEBI" id="CHEBI:30616"/>
    </ligand>
</feature>
<feature type="binding site" evidence="1">
    <location>
        <position position="168"/>
    </location>
    <ligand>
        <name>Mg(2+)</name>
        <dbReference type="ChEBI" id="CHEBI:18420"/>
    </ligand>
</feature>
<feature type="binding site" evidence="1">
    <location>
        <position position="210"/>
    </location>
    <ligand>
        <name>Mg(2+)</name>
        <dbReference type="ChEBI" id="CHEBI:18420"/>
    </ligand>
</feature>
<keyword id="KW-0067">ATP-binding</keyword>
<keyword id="KW-0418">Kinase</keyword>
<keyword id="KW-0460">Magnesium</keyword>
<keyword id="KW-0479">Metal-binding</keyword>
<keyword id="KW-0511">Multifunctional enzyme</keyword>
<keyword id="KW-0547">Nucleotide-binding</keyword>
<keyword id="KW-0723">Serine/threonine-protein kinase</keyword>
<keyword id="KW-0808">Transferase</keyword>
<reference key="1">
    <citation type="journal article" date="2010" name="Genome Biol. Evol.">
        <title>Continuing evolution of Burkholderia mallei through genome reduction and large-scale rearrangements.</title>
        <authorList>
            <person name="Losada L."/>
            <person name="Ronning C.M."/>
            <person name="DeShazer D."/>
            <person name="Woods D."/>
            <person name="Fedorova N."/>
            <person name="Kim H.S."/>
            <person name="Shabalina S.A."/>
            <person name="Pearson T.R."/>
            <person name="Brinkac L."/>
            <person name="Tan P."/>
            <person name="Nandi T."/>
            <person name="Crabtree J."/>
            <person name="Badger J."/>
            <person name="Beckstrom-Sternberg S."/>
            <person name="Saqib M."/>
            <person name="Schutzer S.E."/>
            <person name="Keim P."/>
            <person name="Nierman W.C."/>
        </authorList>
    </citation>
    <scope>NUCLEOTIDE SEQUENCE [LARGE SCALE GENOMIC DNA]</scope>
    <source>
        <strain>SAVP1</strain>
    </source>
</reference>
<accession>A1UZM8</accession>
<dbReference type="EC" id="2.7.11.-" evidence="1"/>
<dbReference type="EC" id="2.7.4.-" evidence="1"/>
<dbReference type="EMBL" id="CP000526">
    <property type="protein sequence ID" value="ABM49864.1"/>
    <property type="molecule type" value="Genomic_DNA"/>
</dbReference>
<dbReference type="RefSeq" id="WP_004195225.1">
    <property type="nucleotide sequence ID" value="NC_008785.1"/>
</dbReference>
<dbReference type="SMR" id="A1UZM8"/>
<dbReference type="GeneID" id="93059051"/>
<dbReference type="KEGG" id="bmv:BMASAVP1_A0079"/>
<dbReference type="HOGENOM" id="CLU_052030_0_2_4"/>
<dbReference type="GO" id="GO:0005524">
    <property type="term" value="F:ATP binding"/>
    <property type="evidence" value="ECO:0007669"/>
    <property type="project" value="UniProtKB-UniRule"/>
</dbReference>
<dbReference type="GO" id="GO:0000287">
    <property type="term" value="F:magnesium ion binding"/>
    <property type="evidence" value="ECO:0007669"/>
    <property type="project" value="UniProtKB-UniRule"/>
</dbReference>
<dbReference type="GO" id="GO:0000155">
    <property type="term" value="F:phosphorelay sensor kinase activity"/>
    <property type="evidence" value="ECO:0007669"/>
    <property type="project" value="InterPro"/>
</dbReference>
<dbReference type="GO" id="GO:0004674">
    <property type="term" value="F:protein serine/threonine kinase activity"/>
    <property type="evidence" value="ECO:0007669"/>
    <property type="project" value="UniProtKB-KW"/>
</dbReference>
<dbReference type="GO" id="GO:0004712">
    <property type="term" value="F:protein serine/threonine/tyrosine kinase activity"/>
    <property type="evidence" value="ECO:0007669"/>
    <property type="project" value="UniProtKB-UniRule"/>
</dbReference>
<dbReference type="GO" id="GO:0006109">
    <property type="term" value="P:regulation of carbohydrate metabolic process"/>
    <property type="evidence" value="ECO:0007669"/>
    <property type="project" value="UniProtKB-UniRule"/>
</dbReference>
<dbReference type="CDD" id="cd01918">
    <property type="entry name" value="HprK_C"/>
    <property type="match status" value="1"/>
</dbReference>
<dbReference type="FunFam" id="3.40.50.300:FF:000174">
    <property type="entry name" value="HPr kinase/phosphorylase"/>
    <property type="match status" value="1"/>
</dbReference>
<dbReference type="Gene3D" id="3.40.1390.20">
    <property type="entry name" value="HprK N-terminal domain-like"/>
    <property type="match status" value="1"/>
</dbReference>
<dbReference type="Gene3D" id="3.40.50.300">
    <property type="entry name" value="P-loop containing nucleotide triphosphate hydrolases"/>
    <property type="match status" value="1"/>
</dbReference>
<dbReference type="HAMAP" id="MF_01249">
    <property type="entry name" value="HPr_kinase"/>
    <property type="match status" value="1"/>
</dbReference>
<dbReference type="InterPro" id="IPR003755">
    <property type="entry name" value="HPr(Ser)_kin/Pase"/>
</dbReference>
<dbReference type="InterPro" id="IPR011104">
    <property type="entry name" value="Hpr_kin/Pase_C"/>
</dbReference>
<dbReference type="InterPro" id="IPR011126">
    <property type="entry name" value="Hpr_kin/Pase_Hpr_N"/>
</dbReference>
<dbReference type="InterPro" id="IPR027417">
    <property type="entry name" value="P-loop_NTPase"/>
</dbReference>
<dbReference type="InterPro" id="IPR028979">
    <property type="entry name" value="Ser_kin/Pase_Hpr-like_N_sf"/>
</dbReference>
<dbReference type="NCBIfam" id="TIGR00679">
    <property type="entry name" value="hpr-ser"/>
    <property type="match status" value="1"/>
</dbReference>
<dbReference type="PANTHER" id="PTHR30305:SF1">
    <property type="entry name" value="HPR KINASE_PHOSPHORYLASE"/>
    <property type="match status" value="1"/>
</dbReference>
<dbReference type="PANTHER" id="PTHR30305">
    <property type="entry name" value="PROTEIN YJDM-RELATED"/>
    <property type="match status" value="1"/>
</dbReference>
<dbReference type="Pfam" id="PF07475">
    <property type="entry name" value="Hpr_kinase_C"/>
    <property type="match status" value="1"/>
</dbReference>
<dbReference type="Pfam" id="PF02603">
    <property type="entry name" value="Hpr_kinase_N"/>
    <property type="match status" value="1"/>
</dbReference>
<dbReference type="SUPFAM" id="SSF75138">
    <property type="entry name" value="HprK N-terminal domain-like"/>
    <property type="match status" value="1"/>
</dbReference>
<dbReference type="SUPFAM" id="SSF53795">
    <property type="entry name" value="PEP carboxykinase-like"/>
    <property type="match status" value="1"/>
</dbReference>
<sequence length="322" mass="35165">MDTSSINAQSIFDDNAAMLKLSWLTGHEGWERGFSADTVANATSSADLVGHLNLIHPNRIQVLGEAEIDYYQRQTDEDRSRHMAELIALEPPFLVVAGGAAAPPELVLRCTRSSTPLFTTPMSAAAVIDSLRLYMSRILAPRATLHGVFLDILGMGVLLTGDSGLGKSELGLELISRGHGLVADDAVDFVRLGPDFVEGRCPPLLQNLLEVRGLGLLDIKTIFGETAVRRKMKLKLIVQLVRRPDGEFQRLPLESQTVDVLGLPISKVTIQVAAGRNLAVLVEAAVRNTILQLRGIDTLRDFMDRQRLAMQDPDSQFPGKLV</sequence>
<comment type="function">
    <text evidence="1">Catalyzes the ATP- as well as the pyrophosphate-dependent phosphorylation of a specific serine residue in HPr, a phosphocarrier protein of the phosphoenolpyruvate-dependent sugar phosphotransferase system (PTS). HprK/P also catalyzes the pyrophosphate-producing, inorganic phosphate-dependent dephosphorylation (phosphorolysis) of seryl-phosphorylated HPr (P-Ser-HPr).</text>
</comment>
<comment type="catalytic activity">
    <reaction evidence="1">
        <text>[HPr protein]-L-serine + ATP = [HPr protein]-O-phospho-L-serine + ADP + H(+)</text>
        <dbReference type="Rhea" id="RHEA:46600"/>
        <dbReference type="Rhea" id="RHEA-COMP:11602"/>
        <dbReference type="Rhea" id="RHEA-COMP:11603"/>
        <dbReference type="ChEBI" id="CHEBI:15378"/>
        <dbReference type="ChEBI" id="CHEBI:29999"/>
        <dbReference type="ChEBI" id="CHEBI:30616"/>
        <dbReference type="ChEBI" id="CHEBI:83421"/>
        <dbReference type="ChEBI" id="CHEBI:456216"/>
    </reaction>
</comment>
<comment type="catalytic activity">
    <reaction evidence="1">
        <text>[HPr protein]-O-phospho-L-serine + phosphate + H(+) = [HPr protein]-L-serine + diphosphate</text>
        <dbReference type="Rhea" id="RHEA:46604"/>
        <dbReference type="Rhea" id="RHEA-COMP:11602"/>
        <dbReference type="Rhea" id="RHEA-COMP:11603"/>
        <dbReference type="ChEBI" id="CHEBI:15378"/>
        <dbReference type="ChEBI" id="CHEBI:29999"/>
        <dbReference type="ChEBI" id="CHEBI:33019"/>
        <dbReference type="ChEBI" id="CHEBI:43474"/>
        <dbReference type="ChEBI" id="CHEBI:83421"/>
    </reaction>
</comment>
<comment type="cofactor">
    <cofactor evidence="1">
        <name>Mg(2+)</name>
        <dbReference type="ChEBI" id="CHEBI:18420"/>
    </cofactor>
</comment>
<comment type="subunit">
    <text evidence="1">Homohexamer.</text>
</comment>
<comment type="domain">
    <text evidence="1">The Walker A ATP-binding motif also binds Pi and PPi.</text>
</comment>
<comment type="miscellaneous">
    <text evidence="1">Both phosphorylation and phosphorolysis are carried out by the same active site and suggest a common mechanism for both reactions.</text>
</comment>
<comment type="similarity">
    <text evidence="1">Belongs to the HPrK/P family.</text>
</comment>
<evidence type="ECO:0000255" key="1">
    <source>
        <dbReference type="HAMAP-Rule" id="MF_01249"/>
    </source>
</evidence>
<organism>
    <name type="scientific">Burkholderia mallei (strain SAVP1)</name>
    <dbReference type="NCBI Taxonomy" id="320388"/>
    <lineage>
        <taxon>Bacteria</taxon>
        <taxon>Pseudomonadati</taxon>
        <taxon>Pseudomonadota</taxon>
        <taxon>Betaproteobacteria</taxon>
        <taxon>Burkholderiales</taxon>
        <taxon>Burkholderiaceae</taxon>
        <taxon>Burkholderia</taxon>
        <taxon>pseudomallei group</taxon>
    </lineage>
</organism>
<protein>
    <recommendedName>
        <fullName evidence="1">HPr kinase/phosphorylase</fullName>
        <shortName evidence="1">HPrK/P</shortName>
        <ecNumber evidence="1">2.7.11.-</ecNumber>
        <ecNumber evidence="1">2.7.4.-</ecNumber>
    </recommendedName>
    <alternativeName>
        <fullName evidence="1">HPr(Ser) kinase/phosphorylase</fullName>
    </alternativeName>
</protein>
<name>HPRK_BURMS</name>